<gene>
    <name evidence="1" type="primary">SLC2A3</name>
    <name evidence="5" type="synonym">GLUT3</name>
</gene>
<reference key="1">
    <citation type="journal article" date="1996" name="Gene">
        <title>Canine brain glucose transporter 3: gene sequence, phylogenetic comparisons and analysis of functional sites.</title>
        <authorList>
            <person name="Borson N.D."/>
            <person name="Salo W.L."/>
            <person name="Drewes L.R."/>
        </authorList>
    </citation>
    <scope>NUCLEOTIDE SEQUENCE [MRNA]</scope>
    <source>
        <tissue>Brain cortex</tissue>
    </source>
</reference>
<accession>P47842</accession>
<sequence>MGTQKVTVSLIFALSIATIGSFQFGYNTGVINAPETIIKDFLNYTLEEKSENLPTEVLLTSLWSLSVAIFSVGGMIGSFSVGLFVNRFGRRNSMLMVNLLAVAGGCLMGFCKIAQSVEMLILGRLIIGLFCGLCTGFVPMYIGEISPTALRGAFGTLNQLGIVIGILVAQIFGLKVIMGTEELWPLLLGFTIIPAVLQSAALPFCPESPRFLLINRKEEENAKEILQRLWGTQDVSQDIQEMKDESARMAQEKQVTVLELFRSRSYRQPIIISIMLQLSQQLSGINAVFYYSTGIFKDAGVEEPIYATIGAGVVNTIFTVVSLFLVERAGRRTLHMIGLGGMAVCSILMTISLLLKDNYNWMSFVCIGAILVFVAFFEIGPGPIPWFIVAELFSQGPRPAAMAVAGCSNWTSNFLVGLLFPSAAFYLGAYVFIIFTGFLIVFLVFTFFKVPETRGRTFEEITRAFEGQGQDANRAEKGPIVEMNSMQPVKETATV</sequence>
<dbReference type="EMBL" id="L35267">
    <property type="protein sequence ID" value="AAA51454.1"/>
    <property type="molecule type" value="mRNA"/>
</dbReference>
<dbReference type="RefSeq" id="NP_001003308.1">
    <property type="nucleotide sequence ID" value="NM_001003308.1"/>
</dbReference>
<dbReference type="SMR" id="P47842"/>
<dbReference type="FunCoup" id="P47842">
    <property type="interactions" value="123"/>
</dbReference>
<dbReference type="STRING" id="9615.ENSCAFP00000052705"/>
<dbReference type="GlyCosmos" id="P47842">
    <property type="glycosylation" value="1 site, No reported glycans"/>
</dbReference>
<dbReference type="PaxDb" id="9612-ENSCAFP00000020500"/>
<dbReference type="eggNOG" id="KOG0569">
    <property type="taxonomic scope" value="Eukaryota"/>
</dbReference>
<dbReference type="InParanoid" id="P47842"/>
<dbReference type="OrthoDB" id="4540492at2759"/>
<dbReference type="Proteomes" id="UP000002254">
    <property type="component" value="Unplaced"/>
</dbReference>
<dbReference type="Proteomes" id="UP000694429">
    <property type="component" value="Unplaced"/>
</dbReference>
<dbReference type="Proteomes" id="UP000694542">
    <property type="component" value="Unplaced"/>
</dbReference>
<dbReference type="Proteomes" id="UP000805418">
    <property type="component" value="Unplaced"/>
</dbReference>
<dbReference type="GO" id="GO:0042995">
    <property type="term" value="C:cell projection"/>
    <property type="evidence" value="ECO:0007669"/>
    <property type="project" value="UniProtKB-SubCell"/>
</dbReference>
<dbReference type="GO" id="GO:0016020">
    <property type="term" value="C:membrane"/>
    <property type="evidence" value="ECO:0000250"/>
    <property type="project" value="UniProtKB"/>
</dbReference>
<dbReference type="GO" id="GO:0043204">
    <property type="term" value="C:perikaryon"/>
    <property type="evidence" value="ECO:0007669"/>
    <property type="project" value="UniProtKB-SubCell"/>
</dbReference>
<dbReference type="GO" id="GO:0005886">
    <property type="term" value="C:plasma membrane"/>
    <property type="evidence" value="ECO:0000250"/>
    <property type="project" value="UniProtKB"/>
</dbReference>
<dbReference type="GO" id="GO:0005536">
    <property type="term" value="F:D-glucose binding"/>
    <property type="evidence" value="ECO:0000250"/>
    <property type="project" value="UniProtKB"/>
</dbReference>
<dbReference type="GO" id="GO:0055056">
    <property type="term" value="F:D-glucose transmembrane transporter activity"/>
    <property type="evidence" value="ECO:0000250"/>
    <property type="project" value="UniProtKB"/>
</dbReference>
<dbReference type="GO" id="GO:0005354">
    <property type="term" value="F:galactose transmembrane transporter activity"/>
    <property type="evidence" value="ECO:0000250"/>
    <property type="project" value="UniProtKB"/>
</dbReference>
<dbReference type="GO" id="GO:0046323">
    <property type="term" value="P:D-glucose import"/>
    <property type="evidence" value="ECO:0000318"/>
    <property type="project" value="GO_Central"/>
</dbReference>
<dbReference type="GO" id="GO:1904659">
    <property type="term" value="P:D-glucose transmembrane transport"/>
    <property type="evidence" value="ECO:0000250"/>
    <property type="project" value="UniProtKB"/>
</dbReference>
<dbReference type="GO" id="GO:0070837">
    <property type="term" value="P:dehydroascorbic acid transport"/>
    <property type="evidence" value="ECO:0000318"/>
    <property type="project" value="GO_Central"/>
</dbReference>
<dbReference type="GO" id="GO:0015757">
    <property type="term" value="P:galactose transmembrane transport"/>
    <property type="evidence" value="ECO:0000250"/>
    <property type="project" value="UniProtKB"/>
</dbReference>
<dbReference type="CDD" id="cd17431">
    <property type="entry name" value="MFS_GLUT_Class1"/>
    <property type="match status" value="1"/>
</dbReference>
<dbReference type="FunFam" id="1.20.1250.20:FF:000040">
    <property type="entry name" value="Solute carrier family 2, facilitated glucose transporter member 1"/>
    <property type="match status" value="1"/>
</dbReference>
<dbReference type="Gene3D" id="1.20.1250.20">
    <property type="entry name" value="MFS general substrate transporter like domains"/>
    <property type="match status" value="1"/>
</dbReference>
<dbReference type="InterPro" id="IPR002945">
    <property type="entry name" value="Glc_transpt_3"/>
</dbReference>
<dbReference type="InterPro" id="IPR045263">
    <property type="entry name" value="GLUT"/>
</dbReference>
<dbReference type="InterPro" id="IPR020846">
    <property type="entry name" value="MFS_dom"/>
</dbReference>
<dbReference type="InterPro" id="IPR005828">
    <property type="entry name" value="MFS_sugar_transport-like"/>
</dbReference>
<dbReference type="InterPro" id="IPR036259">
    <property type="entry name" value="MFS_trans_sf"/>
</dbReference>
<dbReference type="InterPro" id="IPR003663">
    <property type="entry name" value="Sugar/inositol_transpt"/>
</dbReference>
<dbReference type="InterPro" id="IPR005829">
    <property type="entry name" value="Sugar_transporter_CS"/>
</dbReference>
<dbReference type="NCBIfam" id="TIGR00879">
    <property type="entry name" value="SP"/>
    <property type="match status" value="1"/>
</dbReference>
<dbReference type="PANTHER" id="PTHR23503">
    <property type="entry name" value="SOLUTE CARRIER FAMILY 2"/>
    <property type="match status" value="1"/>
</dbReference>
<dbReference type="PANTHER" id="PTHR23503:SF99">
    <property type="entry name" value="SOLUTE CARRIER FAMILY 2, FACILITATED GLUCOSE TRANSPORTER MEMBER 3"/>
    <property type="match status" value="1"/>
</dbReference>
<dbReference type="Pfam" id="PF00083">
    <property type="entry name" value="Sugar_tr"/>
    <property type="match status" value="1"/>
</dbReference>
<dbReference type="PRINTS" id="PR01192">
    <property type="entry name" value="GLUCTRSPORT3"/>
</dbReference>
<dbReference type="PRINTS" id="PR00171">
    <property type="entry name" value="SUGRTRNSPORT"/>
</dbReference>
<dbReference type="SUPFAM" id="SSF103473">
    <property type="entry name" value="MFS general substrate transporter"/>
    <property type="match status" value="1"/>
</dbReference>
<dbReference type="PROSITE" id="PS50850">
    <property type="entry name" value="MFS"/>
    <property type="match status" value="1"/>
</dbReference>
<dbReference type="PROSITE" id="PS00216">
    <property type="entry name" value="SUGAR_TRANSPORT_1"/>
    <property type="match status" value="1"/>
</dbReference>
<dbReference type="PROSITE" id="PS00217">
    <property type="entry name" value="SUGAR_TRANSPORT_2"/>
    <property type="match status" value="1"/>
</dbReference>
<evidence type="ECO:0000250" key="1">
    <source>
        <dbReference type="UniProtKB" id="P11169"/>
    </source>
</evidence>
<evidence type="ECO:0000250" key="2">
    <source>
        <dbReference type="UniProtKB" id="P32037"/>
    </source>
</evidence>
<evidence type="ECO:0000250" key="3">
    <source>
        <dbReference type="UniProtKB" id="Q07647"/>
    </source>
</evidence>
<evidence type="ECO:0000255" key="4"/>
<evidence type="ECO:0000303" key="5">
    <source>
    </source>
</evidence>
<evidence type="ECO:0000305" key="6"/>
<protein>
    <recommendedName>
        <fullName evidence="6">Solute carrier family 2, facilitated glucose transporter member 3</fullName>
    </recommendedName>
    <alternativeName>
        <fullName evidence="5">Glucose transporter type 3, brain</fullName>
        <shortName evidence="5">GLUT-3</shortName>
    </alternativeName>
</protein>
<proteinExistence type="evidence at transcript level"/>
<organism>
    <name type="scientific">Canis lupus familiaris</name>
    <name type="common">Dog</name>
    <name type="synonym">Canis familiaris</name>
    <dbReference type="NCBI Taxonomy" id="9615"/>
    <lineage>
        <taxon>Eukaryota</taxon>
        <taxon>Metazoa</taxon>
        <taxon>Chordata</taxon>
        <taxon>Craniata</taxon>
        <taxon>Vertebrata</taxon>
        <taxon>Euteleostomi</taxon>
        <taxon>Mammalia</taxon>
        <taxon>Eutheria</taxon>
        <taxon>Laurasiatheria</taxon>
        <taxon>Carnivora</taxon>
        <taxon>Caniformia</taxon>
        <taxon>Canidae</taxon>
        <taxon>Canis</taxon>
    </lineage>
</organism>
<keyword id="KW-1003">Cell membrane</keyword>
<keyword id="KW-0966">Cell projection</keyword>
<keyword id="KW-0325">Glycoprotein</keyword>
<keyword id="KW-0472">Membrane</keyword>
<keyword id="KW-0597">Phosphoprotein</keyword>
<keyword id="KW-1185">Reference proteome</keyword>
<keyword id="KW-0762">Sugar transport</keyword>
<keyword id="KW-0812">Transmembrane</keyword>
<keyword id="KW-1133">Transmembrane helix</keyword>
<keyword id="KW-0813">Transport</keyword>
<name>GTR3_CANLF</name>
<comment type="function">
    <text evidence="1 2">Facilitative glucose transporter. Can also mediate the uptake of various other monosaccharides across the cell membrane. Mediates the uptake of glucose, 2-deoxyglucose, galactose, mannose, xylose and fucose, and probably also dehydroascorbate. Does not mediate fructose transport. Required for mesendoderm differentiation (By similarity).</text>
</comment>
<comment type="catalytic activity">
    <reaction evidence="1">
        <text>D-glucose(out) = D-glucose(in)</text>
        <dbReference type="Rhea" id="RHEA:60376"/>
        <dbReference type="ChEBI" id="CHEBI:4167"/>
    </reaction>
</comment>
<comment type="catalytic activity">
    <reaction evidence="1">
        <text>D-galactose(in) = D-galactose(out)</text>
        <dbReference type="Rhea" id="RHEA:34915"/>
        <dbReference type="ChEBI" id="CHEBI:4139"/>
    </reaction>
</comment>
<comment type="activity regulation">
    <text evidence="1">Deoxyglucose transport is inhibited by D-glucose, D-galactose and maltose. Galactose transport is inhibited by D-glucose and maltose.</text>
</comment>
<comment type="subunit">
    <text evidence="2">Interacts with SMIM43; the interaction may promote SLC2A3-mediated glucose transport to meet the energy needs of mesendoderm differentiation.</text>
</comment>
<comment type="subcellular location">
    <subcellularLocation>
        <location evidence="1">Cell membrane</location>
        <topology evidence="1">Multi-pass membrane protein</topology>
    </subcellularLocation>
    <subcellularLocation>
        <location evidence="3">Perikaryon</location>
    </subcellularLocation>
    <subcellularLocation>
        <location evidence="3">Cell projection</location>
    </subcellularLocation>
    <text evidence="3">Localized to densely spaced patches along neuronal processes.</text>
</comment>
<comment type="domain">
    <text evidence="1">Transport is mediated via a series of conformation changes, switching between a conformation where the substrate-binding cavity is accessible from the outside, and a another conformation where it is accessible from the cytoplasm.</text>
</comment>
<comment type="similarity">
    <text evidence="6">Belongs to the major facilitator superfamily. Sugar transporter (TC 2.A.1.1) family. Glucose transporter subfamily.</text>
</comment>
<feature type="chain" id="PRO_0000050352" description="Solute carrier family 2, facilitated glucose transporter member 3">
    <location>
        <begin position="1"/>
        <end position="495"/>
    </location>
</feature>
<feature type="topological domain" description="Cytoplasmic" evidence="1">
    <location>
        <begin position="1"/>
        <end position="10"/>
    </location>
</feature>
<feature type="transmembrane region" description="Helical; Name=1" evidence="1 4">
    <location>
        <begin position="11"/>
        <end position="32"/>
    </location>
</feature>
<feature type="topological domain" description="Extracellular" evidence="1">
    <location>
        <begin position="33"/>
        <end position="64"/>
    </location>
</feature>
<feature type="transmembrane region" description="Helical; Name=2" evidence="1 4">
    <location>
        <begin position="65"/>
        <end position="85"/>
    </location>
</feature>
<feature type="topological domain" description="Cytoplasmic" evidence="1">
    <location>
        <begin position="86"/>
        <end position="90"/>
    </location>
</feature>
<feature type="transmembrane region" description="Helical; Name=3" evidence="1 4">
    <location>
        <begin position="91"/>
        <end position="111"/>
    </location>
</feature>
<feature type="topological domain" description="Extracellular" evidence="1">
    <location>
        <begin position="112"/>
        <end position="118"/>
    </location>
</feature>
<feature type="transmembrane region" description="Helical; Name=4" evidence="1 4">
    <location>
        <begin position="119"/>
        <end position="142"/>
    </location>
</feature>
<feature type="topological domain" description="Cytoplasmic" evidence="1">
    <location>
        <begin position="143"/>
        <end position="153"/>
    </location>
</feature>
<feature type="transmembrane region" description="Helical; Name=5" evidence="1 4">
    <location>
        <begin position="154"/>
        <end position="174"/>
    </location>
</feature>
<feature type="topological domain" description="Extracellular" evidence="1">
    <location>
        <begin position="175"/>
        <end position="183"/>
    </location>
</feature>
<feature type="transmembrane region" description="Helical; Name=6" evidence="1 4">
    <location>
        <begin position="184"/>
        <end position="204"/>
    </location>
</feature>
<feature type="topological domain" description="Cytoplasmic" evidence="1">
    <location>
        <begin position="205"/>
        <end position="269"/>
    </location>
</feature>
<feature type="transmembrane region" description="Helical; Name=7" evidence="1 4">
    <location>
        <begin position="270"/>
        <end position="290"/>
    </location>
</feature>
<feature type="topological domain" description="Extracellular" evidence="1">
    <location>
        <begin position="291"/>
        <end position="304"/>
    </location>
</feature>
<feature type="transmembrane region" description="Helical; Name=8" evidence="1 4">
    <location>
        <begin position="305"/>
        <end position="325"/>
    </location>
</feature>
<feature type="topological domain" description="Cytoplasmic" evidence="1">
    <location>
        <begin position="326"/>
        <end position="331"/>
    </location>
</feature>
<feature type="transmembrane region" description="Helical; Name=9" evidence="1 4">
    <location>
        <begin position="332"/>
        <end position="352"/>
    </location>
</feature>
<feature type="topological domain" description="Extracellular" evidence="1">
    <location>
        <begin position="353"/>
        <end position="363"/>
    </location>
</feature>
<feature type="transmembrane region" description="Helical; Name=10" evidence="1 4">
    <location>
        <begin position="364"/>
        <end position="389"/>
    </location>
</feature>
<feature type="topological domain" description="Cytoplasmic" evidence="1">
    <location>
        <begin position="390"/>
        <end position="399"/>
    </location>
</feature>
<feature type="transmembrane region" description="Helical; Name=11" evidence="1 4">
    <location>
        <begin position="400"/>
        <end position="420"/>
    </location>
</feature>
<feature type="topological domain" description="Extracellular" evidence="4">
    <location>
        <begin position="421"/>
        <end position="429"/>
    </location>
</feature>
<feature type="transmembrane region" description="Helical; Name=12" evidence="1 4">
    <location>
        <begin position="430"/>
        <end position="450"/>
    </location>
</feature>
<feature type="topological domain" description="Cytoplasmic" evidence="4">
    <location>
        <begin position="451"/>
        <end position="495"/>
    </location>
</feature>
<feature type="region of interest" description="Important for selectivity against fructose" evidence="1">
    <location>
        <begin position="277"/>
        <end position="279"/>
    </location>
</feature>
<feature type="binding site" evidence="1">
    <location>
        <position position="159"/>
    </location>
    <ligand>
        <name>D-glucose</name>
        <dbReference type="ChEBI" id="CHEBI:4167"/>
    </ligand>
</feature>
<feature type="binding site" evidence="1">
    <location>
        <begin position="280"/>
        <end position="281"/>
    </location>
    <ligand>
        <name>D-glucose</name>
        <dbReference type="ChEBI" id="CHEBI:4167"/>
    </ligand>
</feature>
<feature type="binding site" evidence="1">
    <location>
        <position position="286"/>
    </location>
    <ligand>
        <name>D-glucose</name>
        <dbReference type="ChEBI" id="CHEBI:4167"/>
    </ligand>
</feature>
<feature type="binding site" evidence="1">
    <location>
        <position position="315"/>
    </location>
    <ligand>
        <name>D-glucose</name>
        <dbReference type="ChEBI" id="CHEBI:4167"/>
    </ligand>
</feature>
<feature type="binding site" evidence="1">
    <location>
        <position position="378"/>
    </location>
    <ligand>
        <name>D-glucose</name>
        <dbReference type="ChEBI" id="CHEBI:4167"/>
    </ligand>
</feature>
<feature type="binding site" evidence="1">
    <location>
        <position position="386"/>
    </location>
    <ligand>
        <name>D-glucose</name>
        <dbReference type="ChEBI" id="CHEBI:4167"/>
    </ligand>
</feature>
<feature type="modified residue" description="Phosphothreonine" evidence="2">
    <location>
        <position position="232"/>
    </location>
</feature>
<feature type="modified residue" description="Phosphoserine" evidence="3">
    <location>
        <position position="485"/>
    </location>
</feature>
<feature type="modified residue" description="Phosphothreonine" evidence="3">
    <location>
        <position position="492"/>
    </location>
</feature>
<feature type="glycosylation site" description="N-linked (GlcNAc...) asparagine" evidence="4">
    <location>
        <position position="43"/>
    </location>
</feature>